<sequence>MSRLKKLYTEEIRKSLQEKFGYTNTMQIPVLKKIVISMGLAEAAKDKNLFQAHLEELSMISGQKPLVTKARNSIAGFKLREGQGIGAKVTLRGERMYDFMDRFCNIVSPRIRDFRGFSKKGDGRGCYSLGLEDQQIFPEVDLDRVKRTQGMNITWVTTAQTDAECTTLLELMGLRFKKAQ</sequence>
<organism>
    <name type="scientific">Chlamydia felis (strain Fe/C-56)</name>
    <name type="common">Chlamydophila felis</name>
    <dbReference type="NCBI Taxonomy" id="264202"/>
    <lineage>
        <taxon>Bacteria</taxon>
        <taxon>Pseudomonadati</taxon>
        <taxon>Chlamydiota</taxon>
        <taxon>Chlamydiia</taxon>
        <taxon>Chlamydiales</taxon>
        <taxon>Chlamydiaceae</taxon>
        <taxon>Chlamydia/Chlamydophila group</taxon>
        <taxon>Chlamydia</taxon>
    </lineage>
</organism>
<keyword id="KW-0687">Ribonucleoprotein</keyword>
<keyword id="KW-0689">Ribosomal protein</keyword>
<keyword id="KW-0694">RNA-binding</keyword>
<keyword id="KW-0699">rRNA-binding</keyword>
<keyword id="KW-0820">tRNA-binding</keyword>
<accession>Q252W5</accession>
<proteinExistence type="inferred from homology"/>
<evidence type="ECO:0000255" key="1">
    <source>
        <dbReference type="HAMAP-Rule" id="MF_01333"/>
    </source>
</evidence>
<evidence type="ECO:0000305" key="2"/>
<reference key="1">
    <citation type="journal article" date="2006" name="DNA Res.">
        <title>Genome sequence of the cat pathogen, Chlamydophila felis.</title>
        <authorList>
            <person name="Azuma Y."/>
            <person name="Hirakawa H."/>
            <person name="Yamashita A."/>
            <person name="Cai Y."/>
            <person name="Rahman M.A."/>
            <person name="Suzuki H."/>
            <person name="Mitaku S."/>
            <person name="Toh H."/>
            <person name="Goto S."/>
            <person name="Murakami T."/>
            <person name="Sugi K."/>
            <person name="Hayashi H."/>
            <person name="Fukushi H."/>
            <person name="Hattori M."/>
            <person name="Kuhara S."/>
            <person name="Shirai M."/>
        </authorList>
    </citation>
    <scope>NUCLEOTIDE SEQUENCE [LARGE SCALE GENOMIC DNA]</scope>
    <source>
        <strain>Fe/C-56</strain>
    </source>
</reference>
<feature type="chain" id="PRO_0000242987" description="Large ribosomal subunit protein uL5">
    <location>
        <begin position="1"/>
        <end position="180"/>
    </location>
</feature>
<name>RL5_CHLFF</name>
<dbReference type="EMBL" id="AP006861">
    <property type="protein sequence ID" value="BAE81673.1"/>
    <property type="molecule type" value="Genomic_DNA"/>
</dbReference>
<dbReference type="RefSeq" id="WP_011458447.1">
    <property type="nucleotide sequence ID" value="NC_007899.1"/>
</dbReference>
<dbReference type="SMR" id="Q252W5"/>
<dbReference type="STRING" id="264202.CF0901"/>
<dbReference type="KEGG" id="cfe:CF0901"/>
<dbReference type="eggNOG" id="COG0094">
    <property type="taxonomic scope" value="Bacteria"/>
</dbReference>
<dbReference type="HOGENOM" id="CLU_061015_2_1_0"/>
<dbReference type="OrthoDB" id="9806626at2"/>
<dbReference type="Proteomes" id="UP000001260">
    <property type="component" value="Chromosome"/>
</dbReference>
<dbReference type="GO" id="GO:1990904">
    <property type="term" value="C:ribonucleoprotein complex"/>
    <property type="evidence" value="ECO:0007669"/>
    <property type="project" value="UniProtKB-KW"/>
</dbReference>
<dbReference type="GO" id="GO:0005840">
    <property type="term" value="C:ribosome"/>
    <property type="evidence" value="ECO:0007669"/>
    <property type="project" value="UniProtKB-KW"/>
</dbReference>
<dbReference type="GO" id="GO:0019843">
    <property type="term" value="F:rRNA binding"/>
    <property type="evidence" value="ECO:0007669"/>
    <property type="project" value="UniProtKB-UniRule"/>
</dbReference>
<dbReference type="GO" id="GO:0003735">
    <property type="term" value="F:structural constituent of ribosome"/>
    <property type="evidence" value="ECO:0007669"/>
    <property type="project" value="InterPro"/>
</dbReference>
<dbReference type="GO" id="GO:0000049">
    <property type="term" value="F:tRNA binding"/>
    <property type="evidence" value="ECO:0007669"/>
    <property type="project" value="UniProtKB-UniRule"/>
</dbReference>
<dbReference type="GO" id="GO:0006412">
    <property type="term" value="P:translation"/>
    <property type="evidence" value="ECO:0007669"/>
    <property type="project" value="UniProtKB-UniRule"/>
</dbReference>
<dbReference type="FunFam" id="3.30.1440.10:FF:000001">
    <property type="entry name" value="50S ribosomal protein L5"/>
    <property type="match status" value="1"/>
</dbReference>
<dbReference type="Gene3D" id="3.30.1440.10">
    <property type="match status" value="1"/>
</dbReference>
<dbReference type="HAMAP" id="MF_01333_B">
    <property type="entry name" value="Ribosomal_uL5_B"/>
    <property type="match status" value="1"/>
</dbReference>
<dbReference type="InterPro" id="IPR002132">
    <property type="entry name" value="Ribosomal_uL5"/>
</dbReference>
<dbReference type="InterPro" id="IPR020930">
    <property type="entry name" value="Ribosomal_uL5_bac-type"/>
</dbReference>
<dbReference type="InterPro" id="IPR031309">
    <property type="entry name" value="Ribosomal_uL5_C"/>
</dbReference>
<dbReference type="InterPro" id="IPR020929">
    <property type="entry name" value="Ribosomal_uL5_CS"/>
</dbReference>
<dbReference type="InterPro" id="IPR022803">
    <property type="entry name" value="Ribosomal_uL5_dom_sf"/>
</dbReference>
<dbReference type="InterPro" id="IPR031310">
    <property type="entry name" value="Ribosomal_uL5_N"/>
</dbReference>
<dbReference type="NCBIfam" id="NF000585">
    <property type="entry name" value="PRK00010.1"/>
    <property type="match status" value="1"/>
</dbReference>
<dbReference type="PANTHER" id="PTHR11994">
    <property type="entry name" value="60S RIBOSOMAL PROTEIN L11-RELATED"/>
    <property type="match status" value="1"/>
</dbReference>
<dbReference type="Pfam" id="PF00281">
    <property type="entry name" value="Ribosomal_L5"/>
    <property type="match status" value="1"/>
</dbReference>
<dbReference type="Pfam" id="PF00673">
    <property type="entry name" value="Ribosomal_L5_C"/>
    <property type="match status" value="1"/>
</dbReference>
<dbReference type="PIRSF" id="PIRSF002161">
    <property type="entry name" value="Ribosomal_L5"/>
    <property type="match status" value="1"/>
</dbReference>
<dbReference type="SUPFAM" id="SSF55282">
    <property type="entry name" value="RL5-like"/>
    <property type="match status" value="1"/>
</dbReference>
<dbReference type="PROSITE" id="PS00358">
    <property type="entry name" value="RIBOSOMAL_L5"/>
    <property type="match status" value="1"/>
</dbReference>
<gene>
    <name evidence="1" type="primary">rplE</name>
    <name type="ordered locus">CF0901</name>
</gene>
<comment type="function">
    <text evidence="1">This is one of the proteins that bind and probably mediate the attachment of the 5S RNA into the large ribosomal subunit, where it forms part of the central protuberance. In the 70S ribosome it contacts protein S13 of the 30S subunit (bridge B1b), connecting the 2 subunits; this bridge is implicated in subunit movement. Contacts the P site tRNA; the 5S rRNA and some of its associated proteins might help stabilize positioning of ribosome-bound tRNAs.</text>
</comment>
<comment type="subunit">
    <text evidence="1">Part of the 50S ribosomal subunit; part of the 5S rRNA/L5/L18/L25 subcomplex. Contacts the 5S rRNA and the P site tRNA. Forms a bridge to the 30S subunit in the 70S ribosome.</text>
</comment>
<comment type="similarity">
    <text evidence="1">Belongs to the universal ribosomal protein uL5 family.</text>
</comment>
<protein>
    <recommendedName>
        <fullName evidence="1">Large ribosomal subunit protein uL5</fullName>
    </recommendedName>
    <alternativeName>
        <fullName evidence="2">50S ribosomal protein L5</fullName>
    </alternativeName>
</protein>